<organism>
    <name type="scientific">Sendai virus (strain Ohita)</name>
    <name type="common">SeV</name>
    <dbReference type="NCBI Taxonomy" id="302272"/>
    <lineage>
        <taxon>Viruses</taxon>
        <taxon>Riboviria</taxon>
        <taxon>Orthornavirae</taxon>
        <taxon>Negarnaviricota</taxon>
        <taxon>Haploviricotina</taxon>
        <taxon>Monjiviricetes</taxon>
        <taxon>Mononegavirales</taxon>
        <taxon>Paramyxoviridae</taxon>
        <taxon>Feraresvirinae</taxon>
        <taxon>Respirovirus</taxon>
        <taxon>Respirovirus muris</taxon>
    </lineage>
</organism>
<evidence type="ECO:0000250" key="1"/>
<evidence type="ECO:0000256" key="2">
    <source>
        <dbReference type="SAM" id="MobiDB-lite"/>
    </source>
</evidence>
<organismHost>
    <name type="scientific">Cavia cutleri</name>
    <name type="common">Guinea pig</name>
    <dbReference type="NCBI Taxonomy" id="10144"/>
</organismHost>
<organismHost>
    <name type="scientific">Cricetidae sp.</name>
    <name type="common">Hamster</name>
    <dbReference type="NCBI Taxonomy" id="36483"/>
</organismHost>
<organismHost>
    <name type="scientific">Mus musculus</name>
    <name type="common">Mouse</name>
    <dbReference type="NCBI Taxonomy" id="10090"/>
</organismHost>
<organismHost>
    <name type="scientific">Rattus norvegicus</name>
    <name type="common">Rat</name>
    <dbReference type="NCBI Taxonomy" id="10116"/>
</organismHost>
<gene>
    <name type="primary">P/V/C</name>
</gene>
<name>W_SENDO</name>
<protein>
    <recommendedName>
        <fullName>Protein W</fullName>
    </recommendedName>
</protein>
<accession>P69288</accession>
<dbReference type="EMBL" id="AB005796">
    <property type="status" value="NOT_ANNOTATED_CDS"/>
    <property type="molecule type" value="Genomic_RNA"/>
</dbReference>
<dbReference type="Proteomes" id="UP000006563">
    <property type="component" value="Genome"/>
</dbReference>
<proteinExistence type="inferred from homology"/>
<keyword id="KW-0597">Phosphoprotein</keyword>
<keyword id="KW-0691">RNA editing</keyword>
<reference key="1">
    <citation type="journal article" date="1997" name="J. Gen. Virol.">
        <title>Isolation of an avirulent mutant of Sendai virus with two amino acid mutations from a highly virulent field strain through adaptation to LLC-MK2 cells.</title>
        <authorList>
            <person name="Itoh M."/>
            <person name="Isegawa Y."/>
            <person name="Hotta H."/>
            <person name="Homma M."/>
        </authorList>
    </citation>
    <scope>NUCLEOTIDE SEQUENCE [GENOMIC RNA]</scope>
</reference>
<feature type="chain" id="PRO_0000142836" description="Protein W">
    <location>
        <begin position="1"/>
        <end position="318"/>
    </location>
</feature>
<feature type="region of interest" description="Disordered" evidence="2">
    <location>
        <begin position="1"/>
        <end position="23"/>
    </location>
</feature>
<feature type="region of interest" description="Disordered" evidence="2">
    <location>
        <begin position="54"/>
        <end position="318"/>
    </location>
</feature>
<feature type="compositionally biased region" description="Basic and acidic residues" evidence="2">
    <location>
        <begin position="7"/>
        <end position="20"/>
    </location>
</feature>
<feature type="compositionally biased region" description="Basic and acidic residues" evidence="2">
    <location>
        <begin position="99"/>
        <end position="110"/>
    </location>
</feature>
<feature type="compositionally biased region" description="Basic and acidic residues" evidence="2">
    <location>
        <begin position="150"/>
        <end position="168"/>
    </location>
</feature>
<feature type="compositionally biased region" description="Basic and acidic residues" evidence="2">
    <location>
        <begin position="175"/>
        <end position="193"/>
    </location>
</feature>
<feature type="modified residue" description="Phosphoserine; by host" evidence="1">
    <location>
        <position position="249"/>
    </location>
</feature>
<feature type="modified residue" description="Phosphoserine; by host" evidence="1">
    <location>
        <position position="257"/>
    </location>
</feature>
<feature type="modified residue" description="Phosphoserine; by host" evidence="1">
    <location>
        <position position="260"/>
    </location>
</feature>
<sequence length="318" mass="34156">MDQDALISKEDSEVEREASGGRESLSDVIGFLDAVLSSEPTDIGGDRSWLHNTINTLQRPGSTHRVKGEGEGEVSTSSTQDNRSGEESRVSGGTSEPEAEAHARNVDKQNIHWATGRGASTDSVPQDLGNGRDSGILEDPPNEGGYPRSGAEDENREMAANPDKRGEDQAEGLPEEIRRSAPLPDEREGRADNNGRGVEPGSPHSARVTGVLVIPSPELEEAVLQRNKRRPANSGSRSLTPVVVPSTRSPPPDHDNSTRSPPRKPPTTQDEHTNPRNTPAVRIKDRRPPTGTRSAPDRPTDGYPTHPSPETDATKKGA</sequence>
<comment type="RNA editing">
    <location>
        <position position="318" evidence="1"/>
    </location>
    <text evidence="1">Partially edited. RNA editing at this position consists of an insertion of one or two guanine nucleotides. The sequence displayed here is the W protein, derived from the +2G edited RNA. The unedited RNA gives rise to the P protein (AC O57285), the +1G edited RNA gives rise to the V protein (AC P69287) (By similarity).</text>
</comment>
<comment type="miscellaneous">
    <text>The P/V/C gene has two overlapping open reading frames. One encodes the P/V/W proteins and the other the C/Y proteins.</text>
</comment>